<accession>J3S833</accession>
<keyword id="KW-1015">Disulfide bond</keyword>
<keyword id="KW-1199">Hemostasis impairing toxin</keyword>
<keyword id="KW-0378">Hydrolase</keyword>
<keyword id="KW-0645">Protease</keyword>
<keyword id="KW-0964">Secreted</keyword>
<keyword id="KW-0720">Serine protease</keyword>
<keyword id="KW-0732">Signal</keyword>
<keyword id="KW-0800">Toxin</keyword>
<keyword id="KW-0865">Zymogen</keyword>
<evidence type="ECO:0000250" key="1"/>
<evidence type="ECO:0000255" key="2"/>
<evidence type="ECO:0000255" key="3">
    <source>
        <dbReference type="PROSITE-ProRule" id="PRU00274"/>
    </source>
</evidence>
<feature type="signal peptide" evidence="2">
    <location>
        <begin position="1"/>
        <end position="18"/>
    </location>
</feature>
<feature type="propeptide" id="PRO_0000425634" evidence="1">
    <location>
        <begin position="19"/>
        <end position="24"/>
    </location>
</feature>
<feature type="chain" id="PRO_0000425635" description="Snake venom serine proteinase 2">
    <location>
        <begin position="25"/>
        <end position="259"/>
    </location>
</feature>
<feature type="domain" description="Peptidase S1" evidence="3">
    <location>
        <begin position="25"/>
        <end position="250"/>
    </location>
</feature>
<feature type="active site" description="Charge relay system" evidence="1">
    <location>
        <position position="64"/>
    </location>
</feature>
<feature type="active site" description="Charge relay system" evidence="1">
    <location>
        <position position="109"/>
    </location>
</feature>
<feature type="active site" description="Charge relay system" evidence="1">
    <location>
        <position position="205"/>
    </location>
</feature>
<feature type="disulfide bond" evidence="3">
    <location>
        <begin position="31"/>
        <end position="162"/>
    </location>
</feature>
<feature type="disulfide bond" evidence="3">
    <location>
        <begin position="49"/>
        <end position="65"/>
    </location>
</feature>
<feature type="disulfide bond" evidence="3">
    <location>
        <begin position="97"/>
        <end position="257"/>
    </location>
</feature>
<feature type="disulfide bond" evidence="3">
    <location>
        <begin position="141"/>
        <end position="211"/>
    </location>
</feature>
<feature type="disulfide bond" evidence="3">
    <location>
        <begin position="173"/>
        <end position="190"/>
    </location>
</feature>
<feature type="disulfide bond" evidence="3">
    <location>
        <begin position="201"/>
        <end position="226"/>
    </location>
</feature>
<comment type="function">
    <text evidence="1">Snake venom serine protease that may act in the hemostasis system of the prey.</text>
</comment>
<comment type="subunit">
    <text evidence="1">Monomer.</text>
</comment>
<comment type="subcellular location">
    <subcellularLocation>
        <location>Secreted</location>
    </subcellularLocation>
</comment>
<comment type="tissue specificity">
    <text>Expressed by the venom gland.</text>
</comment>
<comment type="similarity">
    <text evidence="3">Belongs to the peptidase S1 family. Snake venom subfamily.</text>
</comment>
<reference key="1">
    <citation type="journal article" date="2012" name="BMC Genomics">
        <title>The venom-gland transcriptome of the eastern diamondback rattlesnake (Crotalus adamanteus).</title>
        <authorList>
            <person name="Rokyta D.R."/>
            <person name="Lemmon A.R."/>
            <person name="Margres M.J."/>
            <person name="Aronow K."/>
        </authorList>
    </citation>
    <scope>NUCLEOTIDE SEQUENCE [MRNA]</scope>
    <source>
        <tissue>Venom gland</tissue>
    </source>
</reference>
<reference key="2">
    <citation type="journal article" date="2014" name="J. Proteomics">
        <title>Linking the transcriptome and proteome to characterize the venom of the eastern diamondback rattlesnake (Crotalus adamanteus).</title>
        <authorList>
            <person name="Margres M.J."/>
            <person name="McGivern J.J."/>
            <person name="Wray K.P."/>
            <person name="Seavy M."/>
            <person name="Calvin K."/>
            <person name="Rokyta D.R."/>
        </authorList>
    </citation>
    <scope>IDENTIFICATION BY MASS SPECTROMETRY</scope>
    <source>
        <tissue>Venom</tissue>
    </source>
</reference>
<dbReference type="EC" id="3.4.21.-"/>
<dbReference type="EMBL" id="JU173727">
    <property type="protein sequence ID" value="AFJ49253.1"/>
    <property type="molecule type" value="mRNA"/>
</dbReference>
<dbReference type="SMR" id="J3S833"/>
<dbReference type="GO" id="GO:0005576">
    <property type="term" value="C:extracellular region"/>
    <property type="evidence" value="ECO:0007669"/>
    <property type="project" value="UniProtKB-SubCell"/>
</dbReference>
<dbReference type="GO" id="GO:0030141">
    <property type="term" value="C:secretory granule"/>
    <property type="evidence" value="ECO:0007669"/>
    <property type="project" value="TreeGrafter"/>
</dbReference>
<dbReference type="GO" id="GO:0004252">
    <property type="term" value="F:serine-type endopeptidase activity"/>
    <property type="evidence" value="ECO:0007669"/>
    <property type="project" value="InterPro"/>
</dbReference>
<dbReference type="GO" id="GO:0090729">
    <property type="term" value="F:toxin activity"/>
    <property type="evidence" value="ECO:0007669"/>
    <property type="project" value="UniProtKB-KW"/>
</dbReference>
<dbReference type="GO" id="GO:0006508">
    <property type="term" value="P:proteolysis"/>
    <property type="evidence" value="ECO:0007669"/>
    <property type="project" value="UniProtKB-KW"/>
</dbReference>
<dbReference type="CDD" id="cd00190">
    <property type="entry name" value="Tryp_SPc"/>
    <property type="match status" value="1"/>
</dbReference>
<dbReference type="FunFam" id="2.40.10.10:FF:000158">
    <property type="entry name" value="Thrombin-like enzyme saxthrombin"/>
    <property type="match status" value="1"/>
</dbReference>
<dbReference type="FunFam" id="2.40.10.10:FF:000153">
    <property type="entry name" value="Venom plasminogen activator TSV-PA"/>
    <property type="match status" value="1"/>
</dbReference>
<dbReference type="Gene3D" id="2.40.10.10">
    <property type="entry name" value="Trypsin-like serine proteases"/>
    <property type="match status" value="2"/>
</dbReference>
<dbReference type="InterPro" id="IPR009003">
    <property type="entry name" value="Peptidase_S1_PA"/>
</dbReference>
<dbReference type="InterPro" id="IPR043504">
    <property type="entry name" value="Peptidase_S1_PA_chymotrypsin"/>
</dbReference>
<dbReference type="InterPro" id="IPR001314">
    <property type="entry name" value="Peptidase_S1A"/>
</dbReference>
<dbReference type="InterPro" id="IPR001254">
    <property type="entry name" value="Trypsin_dom"/>
</dbReference>
<dbReference type="InterPro" id="IPR018114">
    <property type="entry name" value="TRYPSIN_HIS"/>
</dbReference>
<dbReference type="InterPro" id="IPR033116">
    <property type="entry name" value="TRYPSIN_SER"/>
</dbReference>
<dbReference type="PANTHER" id="PTHR24271:SF47">
    <property type="entry name" value="KALLIKREIN-1"/>
    <property type="match status" value="1"/>
</dbReference>
<dbReference type="PANTHER" id="PTHR24271">
    <property type="entry name" value="KALLIKREIN-RELATED"/>
    <property type="match status" value="1"/>
</dbReference>
<dbReference type="Pfam" id="PF00089">
    <property type="entry name" value="Trypsin"/>
    <property type="match status" value="1"/>
</dbReference>
<dbReference type="PRINTS" id="PR00722">
    <property type="entry name" value="CHYMOTRYPSIN"/>
</dbReference>
<dbReference type="SMART" id="SM00020">
    <property type="entry name" value="Tryp_SPc"/>
    <property type="match status" value="1"/>
</dbReference>
<dbReference type="SUPFAM" id="SSF50494">
    <property type="entry name" value="Trypsin-like serine proteases"/>
    <property type="match status" value="1"/>
</dbReference>
<dbReference type="PROSITE" id="PS50240">
    <property type="entry name" value="TRYPSIN_DOM"/>
    <property type="match status" value="1"/>
</dbReference>
<dbReference type="PROSITE" id="PS00134">
    <property type="entry name" value="TRYPSIN_HIS"/>
    <property type="match status" value="1"/>
</dbReference>
<dbReference type="PROSITE" id="PS00135">
    <property type="entry name" value="TRYPSIN_SER"/>
    <property type="match status" value="1"/>
</dbReference>
<proteinExistence type="evidence at protein level"/>
<name>VSP2_CROAD</name>
<sequence>MVLIRVLANLLILQLSYAQKSSELIFGGRPCNRNEHRFLALVYSDGNQCSGTLINEEWVLTAAHCEGNKMKIHLGVHSKKVPNKDKQTRVPKEKFFCVSSKTYTKWNKDIMLIRLDRPVSNSKHIAPLNLPSSSPSVGSVCRIMGWGTISPTEVILPDVPQCANINLLSYSVCRAAYPEYGLPATSRTLCAGILEGGKDTCAGDSGGPLICNGQFQGIASWGSTLCGYVREPALYTKVFDHLDWIQSIIAGNTDATCPL</sequence>
<protein>
    <recommendedName>
        <fullName>Snake venom serine proteinase 2</fullName>
        <shortName>SVSP</shortName>
        <ecNumber>3.4.21.-</ecNumber>
    </recommendedName>
</protein>
<organism>
    <name type="scientific">Crotalus adamanteus</name>
    <name type="common">Eastern diamondback rattlesnake</name>
    <dbReference type="NCBI Taxonomy" id="8729"/>
    <lineage>
        <taxon>Eukaryota</taxon>
        <taxon>Metazoa</taxon>
        <taxon>Chordata</taxon>
        <taxon>Craniata</taxon>
        <taxon>Vertebrata</taxon>
        <taxon>Euteleostomi</taxon>
        <taxon>Lepidosauria</taxon>
        <taxon>Squamata</taxon>
        <taxon>Bifurcata</taxon>
        <taxon>Unidentata</taxon>
        <taxon>Episquamata</taxon>
        <taxon>Toxicofera</taxon>
        <taxon>Serpentes</taxon>
        <taxon>Colubroidea</taxon>
        <taxon>Viperidae</taxon>
        <taxon>Crotalinae</taxon>
        <taxon>Crotalus</taxon>
    </lineage>
</organism>